<feature type="initiator methionine" description="Removed" evidence="5">
    <location>
        <position position="1"/>
    </location>
</feature>
<feature type="chain" id="PRO_0000144015" description="Protein S100-A12">
    <location>
        <begin position="2"/>
        <end position="92"/>
    </location>
</feature>
<feature type="domain" description="EF-hand 1" evidence="6">
    <location>
        <begin position="13"/>
        <end position="48"/>
    </location>
</feature>
<feature type="domain" description="EF-hand 2" evidence="3">
    <location>
        <begin position="49"/>
        <end position="84"/>
    </location>
</feature>
<feature type="region of interest" description="Hinge domain" evidence="1">
    <location>
        <begin position="38"/>
        <end position="53"/>
    </location>
</feature>
<feature type="binding site" evidence="2">
    <location>
        <position position="16"/>
    </location>
    <ligand>
        <name>Cu cation</name>
        <dbReference type="ChEBI" id="CHEBI:23378"/>
    </ligand>
</feature>
<feature type="binding site" evidence="2">
    <location>
        <position position="16"/>
    </location>
    <ligand>
        <name>Zn(2+)</name>
        <dbReference type="ChEBI" id="CHEBI:29105"/>
    </ligand>
</feature>
<feature type="binding site" evidence="2">
    <location>
        <position position="19"/>
    </location>
    <ligand>
        <name>Ca(2+)</name>
        <dbReference type="ChEBI" id="CHEBI:29108"/>
        <label>1</label>
        <note>low affinity</note>
    </ligand>
</feature>
<feature type="binding site" evidence="2">
    <location>
        <position position="24"/>
    </location>
    <ligand>
        <name>Ca(2+)</name>
        <dbReference type="ChEBI" id="CHEBI:29108"/>
        <label>1</label>
        <note>low affinity</note>
    </ligand>
</feature>
<feature type="binding site" evidence="2">
    <location>
        <position position="26"/>
    </location>
    <ligand>
        <name>Cu cation</name>
        <dbReference type="ChEBI" id="CHEBI:23378"/>
    </ligand>
</feature>
<feature type="binding site" evidence="2">
    <location>
        <position position="26"/>
    </location>
    <ligand>
        <name>Zn(2+)</name>
        <dbReference type="ChEBI" id="CHEBI:29105"/>
    </ligand>
</feature>
<feature type="binding site" evidence="2">
    <location>
        <position position="27"/>
    </location>
    <ligand>
        <name>Ca(2+)</name>
        <dbReference type="ChEBI" id="CHEBI:29108"/>
        <label>1</label>
        <note>low affinity</note>
    </ligand>
</feature>
<feature type="binding site" evidence="2">
    <location>
        <position position="32"/>
    </location>
    <ligand>
        <name>Ca(2+)</name>
        <dbReference type="ChEBI" id="CHEBI:29108"/>
        <label>1</label>
        <note>low affinity</note>
    </ligand>
</feature>
<feature type="binding site" evidence="3">
    <location>
        <position position="62"/>
    </location>
    <ligand>
        <name>Ca(2+)</name>
        <dbReference type="ChEBI" id="CHEBI:29108"/>
        <label>2</label>
        <note>high affinity</note>
    </ligand>
</feature>
<feature type="binding site" evidence="3">
    <location>
        <position position="64"/>
    </location>
    <ligand>
        <name>Ca(2+)</name>
        <dbReference type="ChEBI" id="CHEBI:29108"/>
        <label>2</label>
        <note>high affinity</note>
    </ligand>
</feature>
<feature type="binding site" evidence="3">
    <location>
        <position position="66"/>
    </location>
    <ligand>
        <name>Ca(2+)</name>
        <dbReference type="ChEBI" id="CHEBI:29108"/>
        <label>2</label>
        <note>high affinity</note>
    </ligand>
</feature>
<feature type="binding site" evidence="3">
    <location>
        <position position="73"/>
    </location>
    <ligand>
        <name>Ca(2+)</name>
        <dbReference type="ChEBI" id="CHEBI:29108"/>
        <label>2</label>
        <note>high affinity</note>
    </ligand>
</feature>
<feature type="binding site" evidence="2">
    <location>
        <position position="86"/>
    </location>
    <ligand>
        <name>Cu cation</name>
        <dbReference type="ChEBI" id="CHEBI:23378"/>
    </ligand>
</feature>
<feature type="binding site" evidence="2">
    <location>
        <position position="86"/>
    </location>
    <ligand>
        <name>Zn(2+)</name>
        <dbReference type="ChEBI" id="CHEBI:29105"/>
    </ligand>
</feature>
<feature type="binding site" evidence="2">
    <location>
        <position position="90"/>
    </location>
    <ligand>
        <name>Cu cation</name>
        <dbReference type="ChEBI" id="CHEBI:23378"/>
    </ligand>
</feature>
<feature type="binding site" evidence="2">
    <location>
        <position position="90"/>
    </location>
    <ligand>
        <name>Zn(2+)</name>
        <dbReference type="ChEBI" id="CHEBI:29105"/>
    </ligand>
</feature>
<feature type="sequence conflict" description="In Ref. 2; AA sequence." evidence="6" ref="2">
    <original>R</original>
    <variation>Y</variation>
    <location>
        <position position="31"/>
    </location>
</feature>
<feature type="sequence conflict" description="In Ref. 2; AA sequence." evidence="6" ref="2">
    <original>I</original>
    <variation>G</variation>
    <location>
        <position position="37"/>
    </location>
</feature>
<feature type="sequence conflict" description="In Ref. 4; AA sequence." evidence="6" ref="4">
    <original>D</original>
    <variation>K</variation>
    <location>
        <position position="66"/>
    </location>
</feature>
<feature type="sequence conflict" description="In Ref. 4; AA sequence." evidence="6" ref="4">
    <original>S</original>
    <variation>V</variation>
    <location>
        <position position="70"/>
    </location>
</feature>
<evidence type="ECO:0000250" key="1"/>
<evidence type="ECO:0000250" key="2">
    <source>
        <dbReference type="UniProtKB" id="P80511"/>
    </source>
</evidence>
<evidence type="ECO:0000255" key="3">
    <source>
        <dbReference type="PROSITE-ProRule" id="PRU00448"/>
    </source>
</evidence>
<evidence type="ECO:0000269" key="4">
    <source>
    </source>
</evidence>
<evidence type="ECO:0000269" key="5">
    <source>
    </source>
</evidence>
<evidence type="ECO:0000305" key="6"/>
<accession>P79105</accession>
<accession>Q3T070</accession>
<accession>Q9TR16</accession>
<reference key="1">
    <citation type="journal article" date="1996" name="J. Cell Sci.">
        <title>A novel calcium-binding protein in amniotic fluid, CAAF1: its molecular cloning and tissue distribution.</title>
        <authorList>
            <person name="Hitomi J."/>
            <person name="Yamaguchi K."/>
            <person name="Kikuchi Y."/>
            <person name="Kimura T."/>
            <person name="Maruyama K."/>
            <person name="Nagasaki K."/>
        </authorList>
    </citation>
    <scope>NUCLEOTIDE SEQUENCE [MRNA]</scope>
    <source>
        <tissue>Esophagus</tissue>
    </source>
</reference>
<reference key="2">
    <citation type="journal article" date="1999" name="Cell">
        <title>RAGE mediates a novel proinflammatory axis: a central cell surface receptor for S100/calgranulin polypeptides.</title>
        <authorList>
            <person name="Hofmann M.A."/>
            <person name="Drury S."/>
            <person name="Fu C."/>
            <person name="Qu W."/>
            <person name="Taguchi A."/>
            <person name="Lu Y."/>
            <person name="Avila C."/>
            <person name="Kambham N."/>
            <person name="Bierhaus A."/>
            <person name="Nawroth P."/>
            <person name="Neurath M.F."/>
            <person name="Slattery T."/>
            <person name="Beach D."/>
            <person name="McClary J."/>
            <person name="Nagashima M."/>
            <person name="Morser J."/>
            <person name="Stern D."/>
            <person name="Schmidt A.M."/>
        </authorList>
    </citation>
    <scope>NUCLEOTIDE SEQUENCE [MRNA]</scope>
    <scope>PROTEIN SEQUENCE OF 1-51 AND 66-83</scope>
    <scope>INTERACTION WITH AGER</scope>
    <scope>TISSUE SPECIFICITY</scope>
    <source>
        <tissue>Lung</tissue>
    </source>
</reference>
<reference key="3">
    <citation type="submission" date="2005-08" db="EMBL/GenBank/DDBJ databases">
        <authorList>
            <consortium name="NIH - Mammalian Gene Collection (MGC) project"/>
        </authorList>
    </citation>
    <scope>NUCLEOTIDE SEQUENCE [LARGE SCALE MRNA]</scope>
    <source>
        <strain>Crossbred X Angus</strain>
        <tissue>Liver</tissue>
    </source>
</reference>
<reference key="4">
    <citation type="journal article" date="1996" name="Invest. Ophthalmol. Vis. Sci.">
        <title>Amino acid sequence of an immunogenic corneal stromal protein.</title>
        <authorList>
            <person name="Liu S.H."/>
            <person name="Gottsch J.D."/>
        </authorList>
    </citation>
    <scope>PROTEIN SEQUENCE OF 2-71</scope>
    <source>
        <tissue>Corneal stroma</tissue>
    </source>
</reference>
<protein>
    <recommendedName>
        <fullName>Protein S100-A12</fullName>
    </recommendedName>
    <alternativeName>
        <fullName>Calcium-binding protein in amniotic fluid 1</fullName>
        <shortName>CAAF1</shortName>
    </alternativeName>
    <alternativeName>
        <fullName>Calgranulin-C</fullName>
        <shortName>CAGC</shortName>
    </alternativeName>
    <alternativeName>
        <fullName>Cornea-associated antigen</fullName>
        <shortName>CO-AG</shortName>
    </alternativeName>
    <alternativeName>
        <fullName>Extracellular newly identified RAGE-binding protein</fullName>
        <shortName>EN-RAGE</shortName>
    </alternativeName>
    <alternativeName>
        <fullName>RAGE-binding protein</fullName>
    </alternativeName>
    <alternativeName>
        <fullName>S100 calcium-binding protein A12</fullName>
    </alternativeName>
</protein>
<proteinExistence type="evidence at protein level"/>
<sequence length="92" mass="10685">MTKLEDHLEGIINIFHQYSVRVGHFDTLNKRELKQLITKELPKTLQNTKDQPTIDKIFQDLDADKDGAVSFEEFVVLVSRVLKTAHIDIHKE</sequence>
<comment type="function">
    <text evidence="1">S100A12 is a calcium-, zinc- and copper-binding protein which plays a prominent role in the regulation of inflammatory processes and immune response. Its pro-inflammatory activity involves recruitment of leukocytes, promotion of cytokine and chemokine production, and regulation of leukocyte adhesion and migration. Acts as an alarmin or a danger associated molecular pattern (DAMP) molecule and stimulates innate immune cells via binding to receptor for advanced glycation endproducts (AGER). Binding to AGER activates the MAP-kinase and NF-kappa-B signaling pathways leading to production of pro-inflammatory cytokines and up-regulation of cell adhesion molecules ICAM1 and VCAM1. Acts as a monocyte and mast cell chemoattractant. Can stimulate mast cell degranulation and activation which generates chemokines, histamine and cytokines inducing further leukocyte recruitment to the sites of inflammation. Can inhibit the activity of matrix metalloproteinases; MMP2, MMP3 and MMP9 by chelating Zn(2+) from their active sites (By similarity).</text>
</comment>
<comment type="subunit">
    <text evidence="1">Homodimer. Homooligomer (tetramer or hexamer) in the presence of calcium, zinc and copper ions. Interacts with AGER and both calcium and zinc are essential for the interaction (By similarity). Interacts with CACYBP in a calcium-dependent manner (By similarity).</text>
</comment>
<comment type="subcellular location">
    <subcellularLocation>
        <location evidence="1">Secreted</location>
    </subcellularLocation>
    <subcellularLocation>
        <location evidence="1">Cytoplasm</location>
    </subcellularLocation>
    <subcellularLocation>
        <location evidence="1">Cytoplasm</location>
        <location evidence="1">Cytoskeleton</location>
    </subcellularLocation>
    <subcellularLocation>
        <location evidence="1">Cell membrane</location>
        <topology evidence="1">Peripheral membrane protein</topology>
    </subcellularLocation>
    <text evidence="1">Predominantly localized in the cytoplasm. Upon elevation of the intracellular calcium level, translocated from the cytoplasm to the cytoskeleton and the cell membrane. Upon neutrophil activation is secreted via a microtubule-mediated, alternative pathway (By similarity).</text>
</comment>
<comment type="tissue specificity">
    <text evidence="4">Up-regulated in stimulated inflammatory effector cells.</text>
</comment>
<comment type="domain">
    <text evidence="1">The hinge domain contributes significantly to its chemotactic properties.</text>
</comment>
<comment type="similarity">
    <text evidence="6">Belongs to the S-100 family.</text>
</comment>
<dbReference type="EMBL" id="D49548">
    <property type="protein sequence ID" value="BAA08496.1"/>
    <property type="molecule type" value="mRNA"/>
</dbReference>
<dbReference type="EMBL" id="AF011757">
    <property type="protein sequence ID" value="AAB65423.1"/>
    <property type="molecule type" value="mRNA"/>
</dbReference>
<dbReference type="EMBL" id="BC102542">
    <property type="protein sequence ID" value="AAI02543.1"/>
    <property type="molecule type" value="mRNA"/>
</dbReference>
<dbReference type="RefSeq" id="NP_777076.1">
    <property type="nucleotide sequence ID" value="NM_174651.3"/>
</dbReference>
<dbReference type="RefSeq" id="XP_005203669.1">
    <property type="nucleotide sequence ID" value="XM_005203612.3"/>
</dbReference>
<dbReference type="RefSeq" id="XP_005203670.1">
    <property type="nucleotide sequence ID" value="XM_005203613.1"/>
</dbReference>
<dbReference type="SMR" id="P79105"/>
<dbReference type="BioGRID" id="159720">
    <property type="interactions" value="6"/>
</dbReference>
<dbReference type="FunCoup" id="P79105">
    <property type="interactions" value="32"/>
</dbReference>
<dbReference type="STRING" id="9913.ENSBTAP00000034009"/>
<dbReference type="PaxDb" id="9913-ENSBTAP00000056088"/>
<dbReference type="PeptideAtlas" id="P79105"/>
<dbReference type="GeneID" id="282467"/>
<dbReference type="KEGG" id="bta:282467"/>
<dbReference type="CTD" id="6283"/>
<dbReference type="VEuPathDB" id="HostDB:ENSBTAG00000012638"/>
<dbReference type="eggNOG" id="ENOG502SA01">
    <property type="taxonomic scope" value="Eukaryota"/>
</dbReference>
<dbReference type="HOGENOM" id="CLU_138624_6_2_1"/>
<dbReference type="InParanoid" id="P79105"/>
<dbReference type="OMA" id="HEHLHEV"/>
<dbReference type="OrthoDB" id="9909924at2759"/>
<dbReference type="Reactome" id="R-BTA-445989">
    <property type="pathway name" value="TAK1-dependent IKK and NF-kappa-B activation"/>
</dbReference>
<dbReference type="Reactome" id="R-BTA-6798695">
    <property type="pathway name" value="Neutrophil degranulation"/>
</dbReference>
<dbReference type="Reactome" id="R-BTA-879415">
    <property type="pathway name" value="Advanced glycosylation endproduct receptor signaling"/>
</dbReference>
<dbReference type="Reactome" id="R-BTA-933542">
    <property type="pathway name" value="TRAF6 mediated NF-kB activation"/>
</dbReference>
<dbReference type="Proteomes" id="UP000009136">
    <property type="component" value="Chromosome 3"/>
</dbReference>
<dbReference type="Bgee" id="ENSBTAG00000012638">
    <property type="expression patterns" value="Expressed in anterior segment of eyeball and 102 other cell types or tissues"/>
</dbReference>
<dbReference type="GO" id="GO:0005737">
    <property type="term" value="C:cytoplasm"/>
    <property type="evidence" value="ECO:0000318"/>
    <property type="project" value="GO_Central"/>
</dbReference>
<dbReference type="GO" id="GO:0005856">
    <property type="term" value="C:cytoskeleton"/>
    <property type="evidence" value="ECO:0007669"/>
    <property type="project" value="UniProtKB-SubCell"/>
</dbReference>
<dbReference type="GO" id="GO:0005576">
    <property type="term" value="C:extracellular region"/>
    <property type="evidence" value="ECO:0007669"/>
    <property type="project" value="UniProtKB-SubCell"/>
</dbReference>
<dbReference type="GO" id="GO:0005886">
    <property type="term" value="C:plasma membrane"/>
    <property type="evidence" value="ECO:0007669"/>
    <property type="project" value="UniProtKB-SubCell"/>
</dbReference>
<dbReference type="GO" id="GO:0005509">
    <property type="term" value="F:calcium ion binding"/>
    <property type="evidence" value="ECO:0000318"/>
    <property type="project" value="GO_Central"/>
</dbReference>
<dbReference type="GO" id="GO:0048306">
    <property type="term" value="F:calcium-dependent protein binding"/>
    <property type="evidence" value="ECO:0000318"/>
    <property type="project" value="GO_Central"/>
</dbReference>
<dbReference type="GO" id="GO:0050786">
    <property type="term" value="F:RAGE receptor binding"/>
    <property type="evidence" value="ECO:0000318"/>
    <property type="project" value="GO_Central"/>
</dbReference>
<dbReference type="GO" id="GO:0061844">
    <property type="term" value="P:antimicrobial humoral immune response mediated by antimicrobial peptide"/>
    <property type="evidence" value="ECO:0000318"/>
    <property type="project" value="GO_Central"/>
</dbReference>
<dbReference type="GO" id="GO:0043542">
    <property type="term" value="P:endothelial cell migration"/>
    <property type="evidence" value="ECO:0000318"/>
    <property type="project" value="GO_Central"/>
</dbReference>
<dbReference type="GO" id="GO:0006954">
    <property type="term" value="P:inflammatory response"/>
    <property type="evidence" value="ECO:0007669"/>
    <property type="project" value="UniProtKB-KW"/>
</dbReference>
<dbReference type="GO" id="GO:0045087">
    <property type="term" value="P:innate immune response"/>
    <property type="evidence" value="ECO:0007669"/>
    <property type="project" value="UniProtKB-KW"/>
</dbReference>
<dbReference type="GO" id="GO:0043303">
    <property type="term" value="P:mast cell degranulation"/>
    <property type="evidence" value="ECO:0000314"/>
    <property type="project" value="UniProtKB"/>
</dbReference>
<dbReference type="GO" id="GO:0043123">
    <property type="term" value="P:positive regulation of canonical NF-kappaB signal transduction"/>
    <property type="evidence" value="ECO:0000318"/>
    <property type="project" value="GO_Central"/>
</dbReference>
<dbReference type="CDD" id="cd05030">
    <property type="entry name" value="calgranulins"/>
    <property type="match status" value="1"/>
</dbReference>
<dbReference type="FunFam" id="1.10.238.10:FF:000044">
    <property type="entry name" value="Protein S100"/>
    <property type="match status" value="1"/>
</dbReference>
<dbReference type="Gene3D" id="1.10.238.10">
    <property type="entry name" value="EF-hand"/>
    <property type="match status" value="1"/>
</dbReference>
<dbReference type="InterPro" id="IPR011992">
    <property type="entry name" value="EF-hand-dom_pair"/>
</dbReference>
<dbReference type="InterPro" id="IPR018247">
    <property type="entry name" value="EF_Hand_1_Ca_BS"/>
</dbReference>
<dbReference type="InterPro" id="IPR002048">
    <property type="entry name" value="EF_hand_dom"/>
</dbReference>
<dbReference type="InterPro" id="IPR001751">
    <property type="entry name" value="S100/CaBP7/8-like_CS"/>
</dbReference>
<dbReference type="InterPro" id="IPR013787">
    <property type="entry name" value="S100_Ca-bd_sub"/>
</dbReference>
<dbReference type="PANTHER" id="PTHR11639:SF77">
    <property type="entry name" value="PROTEIN S100-A12"/>
    <property type="match status" value="1"/>
</dbReference>
<dbReference type="PANTHER" id="PTHR11639">
    <property type="entry name" value="S100 CALCIUM-BINDING PROTEIN"/>
    <property type="match status" value="1"/>
</dbReference>
<dbReference type="Pfam" id="PF00036">
    <property type="entry name" value="EF-hand_1"/>
    <property type="match status" value="1"/>
</dbReference>
<dbReference type="Pfam" id="PF01023">
    <property type="entry name" value="S_100"/>
    <property type="match status" value="1"/>
</dbReference>
<dbReference type="SMART" id="SM00054">
    <property type="entry name" value="EFh"/>
    <property type="match status" value="1"/>
</dbReference>
<dbReference type="SMART" id="SM01394">
    <property type="entry name" value="S_100"/>
    <property type="match status" value="1"/>
</dbReference>
<dbReference type="SUPFAM" id="SSF47473">
    <property type="entry name" value="EF-hand"/>
    <property type="match status" value="1"/>
</dbReference>
<dbReference type="PROSITE" id="PS00018">
    <property type="entry name" value="EF_HAND_1"/>
    <property type="match status" value="1"/>
</dbReference>
<dbReference type="PROSITE" id="PS50222">
    <property type="entry name" value="EF_HAND_2"/>
    <property type="match status" value="1"/>
</dbReference>
<dbReference type="PROSITE" id="PS00303">
    <property type="entry name" value="S100_CABP"/>
    <property type="match status" value="1"/>
</dbReference>
<organism>
    <name type="scientific">Bos taurus</name>
    <name type="common">Bovine</name>
    <dbReference type="NCBI Taxonomy" id="9913"/>
    <lineage>
        <taxon>Eukaryota</taxon>
        <taxon>Metazoa</taxon>
        <taxon>Chordata</taxon>
        <taxon>Craniata</taxon>
        <taxon>Vertebrata</taxon>
        <taxon>Euteleostomi</taxon>
        <taxon>Mammalia</taxon>
        <taxon>Eutheria</taxon>
        <taxon>Laurasiatheria</taxon>
        <taxon>Artiodactyla</taxon>
        <taxon>Ruminantia</taxon>
        <taxon>Pecora</taxon>
        <taxon>Bovidae</taxon>
        <taxon>Bovinae</taxon>
        <taxon>Bos</taxon>
    </lineage>
</organism>
<name>S10AC_BOVIN</name>
<keyword id="KW-0106">Calcium</keyword>
<keyword id="KW-1003">Cell membrane</keyword>
<keyword id="KW-0186">Copper</keyword>
<keyword id="KW-0963">Cytoplasm</keyword>
<keyword id="KW-0206">Cytoskeleton</keyword>
<keyword id="KW-0903">Direct protein sequencing</keyword>
<keyword id="KW-0391">Immunity</keyword>
<keyword id="KW-0395">Inflammatory response</keyword>
<keyword id="KW-0399">Innate immunity</keyword>
<keyword id="KW-0472">Membrane</keyword>
<keyword id="KW-0479">Metal-binding</keyword>
<keyword id="KW-1185">Reference proteome</keyword>
<keyword id="KW-0677">Repeat</keyword>
<keyword id="KW-0964">Secreted</keyword>
<keyword id="KW-0862">Zinc</keyword>
<gene>
    <name type="primary">S100A12</name>
    <name type="synonym">CAAF1</name>
</gene>